<gene>
    <name type="primary">LEGB</name>
</gene>
<proteinExistence type="evidence at transcript level"/>
<keyword id="KW-1015">Disulfide bond</keyword>
<keyword id="KW-0708">Seed storage protein</keyword>
<keyword id="KW-0758">Storage protein</keyword>
<reference key="1">
    <citation type="journal article" date="1986" name="Plant Mol. Biol.">
        <title>The complete deduced amino acid sequences of legumin beta-polypeptides from different genetic loci in Pisum.</title>
        <authorList>
            <person name="Domoney C."/>
            <person name="Barker D."/>
            <person name="Casey R."/>
        </authorList>
        <dbReference type="AGRICOLA" id="IND87019921"/>
    </citation>
    <scope>NUCLEOTIDE SEQUENCE [MRNA]</scope>
</reference>
<feature type="chain" id="PRO_0000032070" description="Legumin B alpha chain">
    <location>
        <begin position="1" status="less than"/>
        <end position="161"/>
    </location>
</feature>
<feature type="chain" id="PRO_0000032071" description="Legumin B beta chain">
    <location>
        <begin position="162"/>
        <end position="338"/>
    </location>
</feature>
<feature type="domain" description="Cupin type-1" evidence="1">
    <location>
        <begin position="174"/>
        <end position="321"/>
    </location>
</feature>
<feature type="region of interest" description="Disordered" evidence="2">
    <location>
        <begin position="16"/>
        <end position="162"/>
    </location>
</feature>
<feature type="compositionally biased region" description="Basic and acidic residues" evidence="2">
    <location>
        <begin position="18"/>
        <end position="44"/>
    </location>
</feature>
<feature type="compositionally biased region" description="Acidic residues" evidence="2">
    <location>
        <begin position="82"/>
        <end position="92"/>
    </location>
</feature>
<feature type="compositionally biased region" description="Acidic residues" evidence="2">
    <location>
        <begin position="136"/>
        <end position="150"/>
    </location>
</feature>
<feature type="disulfide bond" description="Interchain (between alpha and beta chains)" evidence="1">
    <location>
        <begin status="unknown"/>
        <end position="168"/>
    </location>
</feature>
<feature type="non-terminal residue">
    <location>
        <position position="1"/>
    </location>
</feature>
<name>LEGB_PEA</name>
<dbReference type="EMBL" id="M16890">
    <property type="protein sequence ID" value="AAA33678.1"/>
    <property type="molecule type" value="mRNA"/>
</dbReference>
<dbReference type="PIR" id="S04321">
    <property type="entry name" value="S04321"/>
</dbReference>
<dbReference type="SMR" id="P14594"/>
<dbReference type="GO" id="GO:0045735">
    <property type="term" value="F:nutrient reservoir activity"/>
    <property type="evidence" value="ECO:0007669"/>
    <property type="project" value="UniProtKB-KW"/>
</dbReference>
<dbReference type="CDD" id="cd02243">
    <property type="entry name" value="cupin_11S_legumin_C"/>
    <property type="match status" value="1"/>
</dbReference>
<dbReference type="FunFam" id="2.60.120.10:FF:000073">
    <property type="entry name" value="Glycinin G1"/>
    <property type="match status" value="1"/>
</dbReference>
<dbReference type="Gene3D" id="2.60.120.10">
    <property type="entry name" value="Jelly Rolls"/>
    <property type="match status" value="3"/>
</dbReference>
<dbReference type="InterPro" id="IPR022379">
    <property type="entry name" value="11S_seedstore_CS"/>
</dbReference>
<dbReference type="InterPro" id="IPR006044">
    <property type="entry name" value="11S_seedstore_pln"/>
</dbReference>
<dbReference type="InterPro" id="IPR006045">
    <property type="entry name" value="Cupin_1"/>
</dbReference>
<dbReference type="InterPro" id="IPR014710">
    <property type="entry name" value="RmlC-like_jellyroll"/>
</dbReference>
<dbReference type="InterPro" id="IPR011051">
    <property type="entry name" value="RmlC_Cupin_sf"/>
</dbReference>
<dbReference type="InterPro" id="IPR050253">
    <property type="entry name" value="Seed_Storage-Functional"/>
</dbReference>
<dbReference type="PANTHER" id="PTHR31189:SF63">
    <property type="entry name" value="GLYCININ G5"/>
    <property type="match status" value="1"/>
</dbReference>
<dbReference type="PANTHER" id="PTHR31189">
    <property type="entry name" value="OS03G0336100 PROTEIN-RELATED"/>
    <property type="match status" value="1"/>
</dbReference>
<dbReference type="Pfam" id="PF00190">
    <property type="entry name" value="Cupin_1"/>
    <property type="match status" value="1"/>
</dbReference>
<dbReference type="PRINTS" id="PR00439">
    <property type="entry name" value="11SGLOBULIN"/>
</dbReference>
<dbReference type="SMART" id="SM00835">
    <property type="entry name" value="Cupin_1"/>
    <property type="match status" value="1"/>
</dbReference>
<dbReference type="SUPFAM" id="SSF51182">
    <property type="entry name" value="RmlC-like cupins"/>
    <property type="match status" value="1"/>
</dbReference>
<dbReference type="PROSITE" id="PS00305">
    <property type="entry name" value="11S_SEED_STORAGE"/>
    <property type="match status" value="1"/>
</dbReference>
<accession>P14594</accession>
<comment type="function">
    <text>This protein found in the seeds of many leguminous and non-leguminous plants is the source of sulfur-containing amino acids in seed meals.</text>
</comment>
<comment type="subunit">
    <text>Hexamer; each subunit is composed of an acidic and a basic chain derived from a single precursor and linked by a disulfide bond.</text>
</comment>
<comment type="similarity">
    <text evidence="3">Belongs to the 11S seed storage protein (globulins) family.</text>
</comment>
<organism>
    <name type="scientific">Pisum sativum</name>
    <name type="common">Garden pea</name>
    <name type="synonym">Lathyrus oleraceus</name>
    <dbReference type="NCBI Taxonomy" id="3888"/>
    <lineage>
        <taxon>Eukaryota</taxon>
        <taxon>Viridiplantae</taxon>
        <taxon>Streptophyta</taxon>
        <taxon>Embryophyta</taxon>
        <taxon>Tracheophyta</taxon>
        <taxon>Spermatophyta</taxon>
        <taxon>Magnoliopsida</taxon>
        <taxon>eudicotyledons</taxon>
        <taxon>Gunneridae</taxon>
        <taxon>Pentapetalae</taxon>
        <taxon>rosids</taxon>
        <taxon>fabids</taxon>
        <taxon>Fabales</taxon>
        <taxon>Fabaceae</taxon>
        <taxon>Papilionoideae</taxon>
        <taxon>50 kb inversion clade</taxon>
        <taxon>NPAAA clade</taxon>
        <taxon>Hologalegina</taxon>
        <taxon>IRL clade</taxon>
        <taxon>Fabeae</taxon>
        <taxon>Pisum</taxon>
    </lineage>
</organism>
<protein>
    <recommendedName>
        <fullName>Legumin B</fullName>
    </recommendedName>
    <component>
        <recommendedName>
            <fullName>Legumin B alpha chain</fullName>
        </recommendedName>
        <alternativeName>
            <fullName>Legumin B acidic chain</fullName>
        </alternativeName>
    </component>
    <component>
        <recommendedName>
            <fullName>Legumin B beta chain</fullName>
        </recommendedName>
        <alternativeName>
            <fullName>Legumin B basic chain</fullName>
        </alternativeName>
    </component>
</protein>
<evidence type="ECO:0000255" key="1"/>
<evidence type="ECO:0000256" key="2">
    <source>
        <dbReference type="SAM" id="MobiDB-lite"/>
    </source>
</evidence>
<evidence type="ECO:0000305" key="3"/>
<sequence length="338" mass="38990">GNSVLSGFNVEFLAHSLNTKEDTAKRLRSPQDERGQIVKVEDGLHIISPELQEEEEQSHSQRKEEEEEEQEQRHRKHSKKEDEDEDEEEEEEREQRHRKHSEKEEEDEDEPRSYETRRKWKKHTAEKKRESHGQGEEEEELEKEEEEEEEIQRQHSKGRKNGLEETICSAKIRENIARPSRGDLYNSGAGRISTVNSLTLPILRNLRLSAEYVLLYRNGIYAPHWNINANSLLYVIRGEGRVRIVNSEGNKVFDDKVSLGQLVVVPQNFVVAQQAGNEEGFEYVVFKTNDRAAVSHVNQVFRATPGEVLANAFGLRHSQVAQIKSNGNRGPLVQPQSQ</sequence>